<proteinExistence type="inferred from homology"/>
<protein>
    <recommendedName>
        <fullName evidence="1">UPF0178 protein PSPA7_5991</fullName>
    </recommendedName>
</protein>
<comment type="similarity">
    <text evidence="1">Belongs to the UPF0178 family.</text>
</comment>
<sequence>MRIWIDADACPKAAKELVCKFALKRKLEVWMVAGQPQVKPPFACVRLVVVESGMDAADDYLVEQAEPGDLVICSDVPLADRLIKKQVAALDPRGREFDARNMGDKLAMRNLMADLRDLGQMGGGQAPYGDRDRQAFANALDRLLTRLQREAGLRANQPHK</sequence>
<reference key="1">
    <citation type="submission" date="2007-06" db="EMBL/GenBank/DDBJ databases">
        <authorList>
            <person name="Dodson R.J."/>
            <person name="Harkins D."/>
            <person name="Paulsen I.T."/>
        </authorList>
    </citation>
    <scope>NUCLEOTIDE SEQUENCE [LARGE SCALE GENOMIC DNA]</scope>
    <source>
        <strain>DSM 24068 / PA7</strain>
    </source>
</reference>
<dbReference type="EMBL" id="CP000744">
    <property type="protein sequence ID" value="ABR84020.1"/>
    <property type="molecule type" value="Genomic_DNA"/>
</dbReference>
<dbReference type="RefSeq" id="WP_003150187.1">
    <property type="nucleotide sequence ID" value="NC_009656.1"/>
</dbReference>
<dbReference type="KEGG" id="pap:PSPA7_5991"/>
<dbReference type="HOGENOM" id="CLU_106619_2_1_6"/>
<dbReference type="Proteomes" id="UP000001582">
    <property type="component" value="Chromosome"/>
</dbReference>
<dbReference type="CDD" id="cd18720">
    <property type="entry name" value="PIN_YqxD-like"/>
    <property type="match status" value="1"/>
</dbReference>
<dbReference type="HAMAP" id="MF_00489">
    <property type="entry name" value="UPF0178"/>
    <property type="match status" value="1"/>
</dbReference>
<dbReference type="InterPro" id="IPR003791">
    <property type="entry name" value="UPF0178"/>
</dbReference>
<dbReference type="NCBIfam" id="NF001095">
    <property type="entry name" value="PRK00124.1"/>
    <property type="match status" value="1"/>
</dbReference>
<dbReference type="PANTHER" id="PTHR35146">
    <property type="entry name" value="UPF0178 PROTEIN YAII"/>
    <property type="match status" value="1"/>
</dbReference>
<dbReference type="PANTHER" id="PTHR35146:SF1">
    <property type="entry name" value="UPF0178 PROTEIN YAII"/>
    <property type="match status" value="1"/>
</dbReference>
<dbReference type="Pfam" id="PF02639">
    <property type="entry name" value="DUF188"/>
    <property type="match status" value="1"/>
</dbReference>
<accession>A6VE23</accession>
<feature type="chain" id="PRO_1000060449" description="UPF0178 protein PSPA7_5991">
    <location>
        <begin position="1"/>
        <end position="160"/>
    </location>
</feature>
<name>Y5991_PSEP7</name>
<gene>
    <name type="ordered locus">PSPA7_5991</name>
</gene>
<organism>
    <name type="scientific">Pseudomonas paraeruginosa (strain DSM 24068 / PA7)</name>
    <name type="common">Pseudomonas aeruginosa (strain PA7)</name>
    <dbReference type="NCBI Taxonomy" id="381754"/>
    <lineage>
        <taxon>Bacteria</taxon>
        <taxon>Pseudomonadati</taxon>
        <taxon>Pseudomonadota</taxon>
        <taxon>Gammaproteobacteria</taxon>
        <taxon>Pseudomonadales</taxon>
        <taxon>Pseudomonadaceae</taxon>
        <taxon>Pseudomonas</taxon>
        <taxon>Pseudomonas paraeruginosa</taxon>
    </lineage>
</organism>
<evidence type="ECO:0000255" key="1">
    <source>
        <dbReference type="HAMAP-Rule" id="MF_00489"/>
    </source>
</evidence>